<gene>
    <name type="primary">mcm4-b</name>
</gene>
<name>MCM4B_XENLA</name>
<feature type="chain" id="PRO_0000194103" description="DNA replication licensing factor mcm4-B">
    <location>
        <begin position="1"/>
        <end position="863"/>
    </location>
</feature>
<feature type="domain" description="MCM">
    <location>
        <begin position="458"/>
        <end position="667"/>
    </location>
</feature>
<feature type="zinc finger region" description="C4-type" evidence="3">
    <location>
        <begin position="306"/>
        <end position="331"/>
    </location>
</feature>
<feature type="region of interest" description="Disordered" evidence="4">
    <location>
        <begin position="1"/>
        <end position="130"/>
    </location>
</feature>
<feature type="short sequence motif" description="Arginine finger">
    <location>
        <begin position="642"/>
        <end position="645"/>
    </location>
</feature>
<feature type="compositionally biased region" description="Polar residues" evidence="4">
    <location>
        <begin position="54"/>
        <end position="64"/>
    </location>
</feature>
<feature type="compositionally biased region" description="Polar residues" evidence="4">
    <location>
        <begin position="84"/>
        <end position="99"/>
    </location>
</feature>
<feature type="binding site" evidence="1">
    <location>
        <position position="471"/>
    </location>
    <ligand>
        <name>ATP</name>
        <dbReference type="ChEBI" id="CHEBI:30616"/>
        <label>2</label>
        <note>ligand shared with MCM7</note>
    </ligand>
</feature>
<feature type="binding site" evidence="1">
    <location>
        <position position="497"/>
    </location>
    <ligand>
        <name>ATP</name>
        <dbReference type="ChEBI" id="CHEBI:30616"/>
        <label>1</label>
        <note>ligand shared with MCM6</note>
    </ligand>
</feature>
<feature type="binding site" evidence="1">
    <location>
        <position position="516"/>
    </location>
    <ligand>
        <name>ATP</name>
        <dbReference type="ChEBI" id="CHEBI:30616"/>
        <label>2</label>
        <note>ligand shared with MCM7</note>
    </ligand>
</feature>
<feature type="binding site" evidence="1">
    <location>
        <position position="517"/>
    </location>
    <ligand>
        <name>ATP</name>
        <dbReference type="ChEBI" id="CHEBI:30616"/>
        <label>2</label>
        <note>ligand shared with MCM7</note>
    </ligand>
</feature>
<feature type="binding site" evidence="1">
    <location>
        <position position="618"/>
    </location>
    <ligand>
        <name>ATP</name>
        <dbReference type="ChEBI" id="CHEBI:30616"/>
        <label>2</label>
        <note>ligand shared with MCM7</note>
    </ligand>
</feature>
<feature type="binding site" evidence="1">
    <location>
        <position position="643"/>
    </location>
    <ligand>
        <name>ATP</name>
        <dbReference type="ChEBI" id="CHEBI:30616"/>
        <label>1</label>
        <note>ligand shared with MCM6</note>
    </ligand>
</feature>
<feature type="binding site" evidence="1">
    <location>
        <position position="732"/>
    </location>
    <ligand>
        <name>ATP</name>
        <dbReference type="ChEBI" id="CHEBI:30616"/>
        <label>1</label>
        <note>ligand shared with MCM6</note>
    </ligand>
</feature>
<feature type="binding site" evidence="1">
    <location>
        <position position="735"/>
    </location>
    <ligand>
        <name>ATP</name>
        <dbReference type="ChEBI" id="CHEBI:30616"/>
        <label>1</label>
        <note>ligand shared with MCM6</note>
    </ligand>
</feature>
<feature type="sequence conflict" description="In Ref. 1; AAB01680." evidence="14" ref="1">
    <original>A</original>
    <variation>V</variation>
    <location>
        <position position="73"/>
    </location>
</feature>
<feature type="sequence conflict" description="In Ref. 4; CAA78751." evidence="14" ref="4">
    <original>F</original>
    <variation>Y</variation>
    <location>
        <position position="524"/>
    </location>
</feature>
<feature type="sequence conflict" description="In Ref. 4; CAA78751." evidence="14" ref="4">
    <original>S</original>
    <variation>G</variation>
    <location>
        <position position="539"/>
    </location>
</feature>
<feature type="sequence conflict" description="In Ref. 4; CAA78751." evidence="14" ref="4">
    <original>R</original>
    <variation>G</variation>
    <location>
        <position position="554"/>
    </location>
</feature>
<feature type="sequence conflict" description="In Ref. 1; AAB01680." evidence="14" ref="1">
    <original>LS</original>
    <variation>RA</variation>
    <location>
        <begin position="740"/>
        <end position="741"/>
    </location>
</feature>
<feature type="helix" evidence="15">
    <location>
        <begin position="159"/>
        <end position="171"/>
    </location>
</feature>
<feature type="helix" evidence="15">
    <location>
        <begin position="192"/>
        <end position="203"/>
    </location>
</feature>
<feature type="strand" evidence="15">
    <location>
        <begin position="207"/>
        <end position="211"/>
    </location>
</feature>
<feature type="helix" evidence="15">
    <location>
        <begin position="212"/>
        <end position="218"/>
    </location>
</feature>
<feature type="helix" evidence="15">
    <location>
        <begin position="220"/>
        <end position="228"/>
    </location>
</feature>
<feature type="helix" evidence="15">
    <location>
        <begin position="230"/>
        <end position="248"/>
    </location>
</feature>
<feature type="strand" evidence="15">
    <location>
        <begin position="259"/>
        <end position="263"/>
    </location>
</feature>
<feature type="helix" evidence="15">
    <location>
        <begin position="276"/>
        <end position="278"/>
    </location>
</feature>
<feature type="strand" evidence="15">
    <location>
        <begin position="281"/>
        <end position="292"/>
    </location>
</feature>
<feature type="strand" evidence="15">
    <location>
        <begin position="304"/>
        <end position="309"/>
    </location>
</feature>
<feature type="strand" evidence="15">
    <location>
        <begin position="329"/>
        <end position="331"/>
    </location>
</feature>
<feature type="strand" evidence="15">
    <location>
        <begin position="337"/>
        <end position="339"/>
    </location>
</feature>
<feature type="turn" evidence="15">
    <location>
        <begin position="341"/>
        <end position="343"/>
    </location>
</feature>
<feature type="strand" evidence="15">
    <location>
        <begin position="349"/>
        <end position="355"/>
    </location>
</feature>
<feature type="turn" evidence="15">
    <location>
        <begin position="358"/>
        <end position="360"/>
    </location>
</feature>
<feature type="strand" evidence="15">
    <location>
        <begin position="369"/>
        <end position="375"/>
    </location>
</feature>
<feature type="helix" evidence="15">
    <location>
        <begin position="376"/>
        <end position="378"/>
    </location>
</feature>
<feature type="strand" evidence="15">
    <location>
        <begin position="387"/>
        <end position="397"/>
    </location>
</feature>
<feature type="strand" evidence="15">
    <location>
        <begin position="400"/>
        <end position="404"/>
    </location>
</feature>
<feature type="strand" evidence="15">
    <location>
        <begin position="408"/>
        <end position="411"/>
    </location>
</feature>
<feature type="strand" evidence="15">
    <location>
        <begin position="413"/>
        <end position="422"/>
    </location>
</feature>
<dbReference type="EC" id="3.6.4.12" evidence="2"/>
<dbReference type="EMBL" id="U29178">
    <property type="protein sequence ID" value="AAB01680.1"/>
    <property type="molecule type" value="mRNA"/>
</dbReference>
<dbReference type="EMBL" id="U46131">
    <property type="protein sequence ID" value="AAA91232.1"/>
    <property type="molecule type" value="mRNA"/>
</dbReference>
<dbReference type="EMBL" id="BC072870">
    <property type="protein sequence ID" value="AAH72870.1"/>
    <property type="molecule type" value="mRNA"/>
</dbReference>
<dbReference type="EMBL" id="Z15033">
    <property type="protein sequence ID" value="CAA78751.1"/>
    <property type="molecule type" value="Genomic_DNA"/>
</dbReference>
<dbReference type="PIR" id="S64720">
    <property type="entry name" value="S64720"/>
</dbReference>
<dbReference type="RefSeq" id="NP_001081448.1">
    <property type="nucleotide sequence ID" value="NM_001087979.1"/>
</dbReference>
<dbReference type="PDB" id="8Q6O">
    <property type="method" value="EM"/>
    <property type="resolution" value="3.14 A"/>
    <property type="chains" value="4/C=1-863"/>
</dbReference>
<dbReference type="PDB" id="8Q6P">
    <property type="method" value="EM"/>
    <property type="resolution" value="3.53 A"/>
    <property type="chains" value="4=1-863"/>
</dbReference>
<dbReference type="PDBsum" id="8Q6O"/>
<dbReference type="PDBsum" id="8Q6P"/>
<dbReference type="EMDB" id="EMD-18191"/>
<dbReference type="EMDB" id="EMD-18192"/>
<dbReference type="EMDB" id="EMD-18195"/>
<dbReference type="SMR" id="P30664"/>
<dbReference type="BioGRID" id="99182">
    <property type="interactions" value="1"/>
</dbReference>
<dbReference type="ComplexPortal" id="CPX-2943">
    <property type="entry name" value="MCM complex"/>
</dbReference>
<dbReference type="IntAct" id="P30664">
    <property type="interactions" value="2"/>
</dbReference>
<dbReference type="GeneID" id="397843"/>
<dbReference type="KEGG" id="xla:397843"/>
<dbReference type="AGR" id="Xenbase:XB-GENE-1011486"/>
<dbReference type="CTD" id="397843"/>
<dbReference type="Xenbase" id="XB-GENE-1011486">
    <property type="gene designation" value="mcm4.L"/>
</dbReference>
<dbReference type="OMA" id="AFFKCNV"/>
<dbReference type="OrthoDB" id="10251574at2759"/>
<dbReference type="Proteomes" id="UP000186698">
    <property type="component" value="Chromosome 6L"/>
</dbReference>
<dbReference type="Bgee" id="397843">
    <property type="expression patterns" value="Expressed in ovary and 19 other cell types or tissues"/>
</dbReference>
<dbReference type="GO" id="GO:0000785">
    <property type="term" value="C:chromatin"/>
    <property type="evidence" value="ECO:0000314"/>
    <property type="project" value="UniProtKB"/>
</dbReference>
<dbReference type="GO" id="GO:0071162">
    <property type="term" value="C:CMG complex"/>
    <property type="evidence" value="ECO:0000314"/>
    <property type="project" value="UniProtKB"/>
</dbReference>
<dbReference type="GO" id="GO:0042555">
    <property type="term" value="C:MCM complex"/>
    <property type="evidence" value="ECO:0000314"/>
    <property type="project" value="UniProtKB"/>
</dbReference>
<dbReference type="GO" id="GO:0005634">
    <property type="term" value="C:nucleus"/>
    <property type="evidence" value="ECO:0000318"/>
    <property type="project" value="GO_Central"/>
</dbReference>
<dbReference type="GO" id="GO:0005524">
    <property type="term" value="F:ATP binding"/>
    <property type="evidence" value="ECO:0007669"/>
    <property type="project" value="UniProtKB-KW"/>
</dbReference>
<dbReference type="GO" id="GO:0016887">
    <property type="term" value="F:ATP hydrolysis activity"/>
    <property type="evidence" value="ECO:0007669"/>
    <property type="project" value="RHEA"/>
</dbReference>
<dbReference type="GO" id="GO:0003682">
    <property type="term" value="F:chromatin binding"/>
    <property type="evidence" value="ECO:0000314"/>
    <property type="project" value="CAFA"/>
</dbReference>
<dbReference type="GO" id="GO:0003697">
    <property type="term" value="F:single-stranded DNA binding"/>
    <property type="evidence" value="ECO:0000318"/>
    <property type="project" value="GO_Central"/>
</dbReference>
<dbReference type="GO" id="GO:0017116">
    <property type="term" value="F:single-stranded DNA helicase activity"/>
    <property type="evidence" value="ECO:0007669"/>
    <property type="project" value="TreeGrafter"/>
</dbReference>
<dbReference type="GO" id="GO:0008270">
    <property type="term" value="F:zinc ion binding"/>
    <property type="evidence" value="ECO:0007669"/>
    <property type="project" value="UniProtKB-KW"/>
</dbReference>
<dbReference type="GO" id="GO:0044786">
    <property type="term" value="P:cell cycle DNA replication"/>
    <property type="evidence" value="ECO:0000314"/>
    <property type="project" value="UniProtKB"/>
</dbReference>
<dbReference type="GO" id="GO:0006260">
    <property type="term" value="P:DNA replication"/>
    <property type="evidence" value="ECO:0000318"/>
    <property type="project" value="GO_Central"/>
</dbReference>
<dbReference type="GO" id="GO:0006271">
    <property type="term" value="P:DNA strand elongation involved in DNA replication"/>
    <property type="evidence" value="ECO:0000318"/>
    <property type="project" value="GO_Central"/>
</dbReference>
<dbReference type="GO" id="GO:0000727">
    <property type="term" value="P:double-strand break repair via break-induced replication"/>
    <property type="evidence" value="ECO:0000318"/>
    <property type="project" value="GO_Central"/>
</dbReference>
<dbReference type="GO" id="GO:1902975">
    <property type="term" value="P:mitotic DNA replication initiation"/>
    <property type="evidence" value="ECO:0000318"/>
    <property type="project" value="GO_Central"/>
</dbReference>
<dbReference type="GO" id="GO:0006279">
    <property type="term" value="P:premeiotic DNA replication"/>
    <property type="evidence" value="ECO:0000314"/>
    <property type="project" value="ComplexPortal"/>
</dbReference>
<dbReference type="GO" id="GO:0030174">
    <property type="term" value="P:regulation of DNA-templated DNA replication initiation"/>
    <property type="evidence" value="ECO:0000314"/>
    <property type="project" value="UniProtKB"/>
</dbReference>
<dbReference type="CDD" id="cd17755">
    <property type="entry name" value="MCM4"/>
    <property type="match status" value="1"/>
</dbReference>
<dbReference type="FunFam" id="2.20.28.10:FF:000003">
    <property type="entry name" value="DNA helicase"/>
    <property type="match status" value="1"/>
</dbReference>
<dbReference type="FunFam" id="3.30.1640.10:FF:000001">
    <property type="entry name" value="DNA helicase"/>
    <property type="match status" value="1"/>
</dbReference>
<dbReference type="FunFam" id="3.40.50.300:FF:000217">
    <property type="entry name" value="DNA helicase"/>
    <property type="match status" value="1"/>
</dbReference>
<dbReference type="Gene3D" id="2.20.28.10">
    <property type="match status" value="1"/>
</dbReference>
<dbReference type="Gene3D" id="3.30.1640.10">
    <property type="entry name" value="mini-chromosome maintenance (MCM) complex, chain A, domain 1"/>
    <property type="match status" value="1"/>
</dbReference>
<dbReference type="Gene3D" id="2.40.50.140">
    <property type="entry name" value="Nucleic acid-binding proteins"/>
    <property type="match status" value="1"/>
</dbReference>
<dbReference type="Gene3D" id="3.40.50.300">
    <property type="entry name" value="P-loop containing nucleotide triphosphate hydrolases"/>
    <property type="match status" value="1"/>
</dbReference>
<dbReference type="InterPro" id="IPR031327">
    <property type="entry name" value="MCM"/>
</dbReference>
<dbReference type="InterPro" id="IPR008047">
    <property type="entry name" value="MCM_4"/>
</dbReference>
<dbReference type="InterPro" id="IPR018525">
    <property type="entry name" value="MCM_CS"/>
</dbReference>
<dbReference type="InterPro" id="IPR001208">
    <property type="entry name" value="MCM_dom"/>
</dbReference>
<dbReference type="InterPro" id="IPR041562">
    <property type="entry name" value="MCM_lid"/>
</dbReference>
<dbReference type="InterPro" id="IPR027925">
    <property type="entry name" value="MCM_N"/>
</dbReference>
<dbReference type="InterPro" id="IPR033762">
    <property type="entry name" value="MCM_OB"/>
</dbReference>
<dbReference type="InterPro" id="IPR012340">
    <property type="entry name" value="NA-bd_OB-fold"/>
</dbReference>
<dbReference type="InterPro" id="IPR027417">
    <property type="entry name" value="P-loop_NTPase"/>
</dbReference>
<dbReference type="PANTHER" id="PTHR11630">
    <property type="entry name" value="DNA REPLICATION LICENSING FACTOR MCM FAMILY MEMBER"/>
    <property type="match status" value="1"/>
</dbReference>
<dbReference type="PANTHER" id="PTHR11630:SF66">
    <property type="entry name" value="DNA REPLICATION LICENSING FACTOR MCM4"/>
    <property type="match status" value="1"/>
</dbReference>
<dbReference type="Pfam" id="PF00493">
    <property type="entry name" value="MCM"/>
    <property type="match status" value="1"/>
</dbReference>
<dbReference type="Pfam" id="PF21128">
    <property type="entry name" value="MCM4_WHD"/>
    <property type="match status" value="1"/>
</dbReference>
<dbReference type="Pfam" id="PF17855">
    <property type="entry name" value="MCM_lid"/>
    <property type="match status" value="1"/>
</dbReference>
<dbReference type="Pfam" id="PF14551">
    <property type="entry name" value="MCM_N"/>
    <property type="match status" value="1"/>
</dbReference>
<dbReference type="Pfam" id="PF17207">
    <property type="entry name" value="MCM_OB"/>
    <property type="match status" value="1"/>
</dbReference>
<dbReference type="PRINTS" id="PR01657">
    <property type="entry name" value="MCMFAMILY"/>
</dbReference>
<dbReference type="PRINTS" id="PR01660">
    <property type="entry name" value="MCMPROTEIN4"/>
</dbReference>
<dbReference type="SMART" id="SM00350">
    <property type="entry name" value="MCM"/>
    <property type="match status" value="1"/>
</dbReference>
<dbReference type="SUPFAM" id="SSF50249">
    <property type="entry name" value="Nucleic acid-binding proteins"/>
    <property type="match status" value="1"/>
</dbReference>
<dbReference type="SUPFAM" id="SSF52540">
    <property type="entry name" value="P-loop containing nucleoside triphosphate hydrolases"/>
    <property type="match status" value="1"/>
</dbReference>
<dbReference type="PROSITE" id="PS00847">
    <property type="entry name" value="MCM_1"/>
    <property type="match status" value="1"/>
</dbReference>
<dbReference type="PROSITE" id="PS50051">
    <property type="entry name" value="MCM_2"/>
    <property type="match status" value="1"/>
</dbReference>
<keyword id="KW-0002">3D-structure</keyword>
<keyword id="KW-0067">ATP-binding</keyword>
<keyword id="KW-0131">Cell cycle</keyword>
<keyword id="KW-0158">Chromosome</keyword>
<keyword id="KW-0235">DNA replication</keyword>
<keyword id="KW-0238">DNA-binding</keyword>
<keyword id="KW-0347">Helicase</keyword>
<keyword id="KW-0378">Hydrolase</keyword>
<keyword id="KW-0479">Metal-binding</keyword>
<keyword id="KW-0547">Nucleotide-binding</keyword>
<keyword id="KW-0539">Nucleus</keyword>
<keyword id="KW-1185">Reference proteome</keyword>
<keyword id="KW-0862">Zinc</keyword>
<keyword id="KW-0863">Zinc-finger</keyword>
<sequence length="863" mass="97123">MSSPTSTPSRRRNKRGRGSNPPTPHGEEVQSPPSQRRRTEDSTSIGELLPMPTSPSGDVQSPSGQELLFSSPAPSRHSAHQSELDLSSPLTYGTPSSRVEGTPRSGIRGTPARQRPDLGSARKVKQVDLHSDQPAAEELVTSEQSLGQKLVIWGTDVNVATCKEKFQRFVQRFIDPSAKEEDNVGLDLNEPIYMQRLEEINVVGDPFLNIDCDHLRNFDQDLYRQLVCYPQEVIPTFDMAANEIFFERYPDSILEHQIQVRPYNALKTRNMRSLNPEDIDQLITISGMVIRTSQIIPEMQEAFFKCQVCAFTTRVEIDRGRIAEPSVCKHCNTTHSMALIHNRSMFSDKQMIKLQESPEDMPAGQTPHTTILYGHNDLVDKVQPGDRVNVTGIYRAVPIRVNPRVRNVKSVYKTHIDVIHYRKTDSKRLHGIDEDTEQKLFTEERVAMLKELAAKPDIYERLAAALAPSIYEHEDIKKGILLQLFGGTRKDFSHTGRGKFRAEVNILLCGDPGTSKSQLLQYVFNLVPRGQYTSGKGSSAVGLTAYVMKDPETRQLVLQTGALVLSDNGICCIDEFDKMNESTRSVLHEVMEQQTLSIAKAGIICQLNARTSVLAAANPVESQWNPKKTTIENIQLPHTLLSRFDLIFLMLDPQDEAYDRRLAHHLVALYYQSEEQMKEEHLDMAVLKDYIAYARTYVNPRLSEEASQALIEAYVSMRKIGSGRGMVSAYPRQLESLIRLSEAHAKVRFSNKVETIDVEEAKRLHREALKQSATDPRTGIVDISILTTGMSATARKRKEELAQVLKKLIQSKGKTPALKYQQLFEDLRGQSDAAITKDMFDEALHALADDDYLTVTGKTVRLL</sequence>
<reference key="1">
    <citation type="journal article" date="1996" name="EMBO J.">
        <title>Chromotin binding, nuclear localization and phosphorylation of Xenopus cdc21 are cell-cycle dependent and associated with the control of initiation of DNA replication.</title>
        <authorList>
            <person name="Coue M."/>
            <person name="Kearsey S.E."/>
            <person name="Mechali M."/>
        </authorList>
    </citation>
    <scope>NUCLEOTIDE SEQUENCE [MRNA]</scope>
    <scope>SUBCELLULAR LOCATION</scope>
    <scope>PHOSPHORYLATION</scope>
    <source>
        <tissue>Oocyte</tissue>
    </source>
</reference>
<reference key="2">
    <citation type="journal article" date="1996" name="Proc. Natl. Acad. Sci. U.S.A.">
        <title>Phosphorylation of MCM4 by cdc2 protein kinase inhibits the activity of the minichromosome maintenance complex.</title>
        <authorList>
            <person name="Hendrickson M."/>
            <person name="Madine M."/>
            <person name="Dalton S."/>
            <person name="Gautier J."/>
        </authorList>
    </citation>
    <scope>NUCLEOTIDE SEQUENCE [MRNA]</scope>
    <scope>IDENTIFICATION IN A COMPLEX WITH MMCM3 AND MCM5</scope>
    <scope>PHOSPHORYLATION</scope>
    <source>
        <tissue>Embryo</tissue>
    </source>
</reference>
<reference key="3">
    <citation type="submission" date="2004-06" db="EMBL/GenBank/DDBJ databases">
        <authorList>
            <consortium name="NIH - Xenopus Gene Collection (XGC) project"/>
        </authorList>
    </citation>
    <scope>NUCLEOTIDE SEQUENCE [LARGE SCALE MRNA]</scope>
    <source>
        <tissue>Ovary</tissue>
    </source>
</reference>
<reference key="4">
    <citation type="journal article" date="1992" name="Nucleic Acids Res.">
        <title>Fission yeast cdc21+ belongs to a family of proteins involved in an early step of chromosome replication.</title>
        <authorList>
            <person name="Coxon A."/>
            <person name="Maundrell K."/>
            <person name="Kearsey S.E."/>
        </authorList>
    </citation>
    <scope>NUCLEOTIDE SEQUENCE [GENOMIC DNA] OF 513-588</scope>
</reference>
<reference key="5">
    <citation type="journal article" date="1998" name="Curr. Biol.">
        <title>Developmental regulation of MCM replication factors in Xenopus laevis.</title>
        <authorList>
            <person name="Sible J.C."/>
            <person name="Erikson E."/>
            <person name="Hendrickson M."/>
            <person name="Maller J.L."/>
            <person name="Gautier J."/>
        </authorList>
    </citation>
    <scope>IDENTIFICATION IN A COMPLEX WITH ZMCM6</scope>
    <scope>DEVELOPMENTAL STAGE</scope>
    <source>
        <tissue>Embryo</tissue>
    </source>
</reference>
<reference key="6">
    <citation type="journal article" date="1998" name="Exp. Cell Res.">
        <title>Evidence for different MCM subcomplexes with differential binding to chromatin in Xenopus.</title>
        <authorList>
            <person name="Coue M."/>
            <person name="Amariglio F."/>
            <person name="Maiorano D."/>
            <person name="Bocquet S."/>
            <person name="Mechali M."/>
        </authorList>
    </citation>
    <scope>IDENTIFICATION IN MCM COMPLEXES</scope>
</reference>
<reference key="7">
    <citation type="journal article" date="2000" name="Mol. Cell. Biol.">
        <title>Distinct phosphoisoforms of the Xenopus Mcm4 protein regulate the function of the Mcm complex.</title>
        <authorList>
            <person name="Pereverzeva I."/>
            <person name="Whitmire E."/>
            <person name="Khan B."/>
            <person name="Coue M."/>
        </authorList>
    </citation>
    <scope>PHOSPHORYLATION</scope>
</reference>
<reference key="8">
    <citation type="journal article" date="2005" name="EMBO J.">
        <title>The ATPase activity of MCM2-7 is dispensable for pre-RC assembly but is required for DNA unwinding.</title>
        <authorList>
            <person name="Ying C.Y."/>
            <person name="Gautier J."/>
        </authorList>
    </citation>
    <scope>FUNCTION</scope>
    <scope>IDENTIFICATION IN A COMPLEX WITH MCM2; MMCM3; MCM5; MMCM6 AND MCM7</scope>
</reference>
<reference key="9">
    <citation type="journal article" date="2005" name="Genes Dev.">
        <title>Cdc7-Drf1 is a developmentally regulated protein kinase required for the initiation of vertebrate DNA replication.</title>
        <authorList>
            <person name="Takahashi T.S."/>
            <person name="Walter J.C."/>
        </authorList>
    </citation>
    <scope>PHOSPHORYLATION</scope>
</reference>
<reference key="10">
    <citation type="journal article" date="2019" name="Life. Sci Alliance">
        <title>Mitotic replisome disassembly depends on TRAIP ubiquitin ligase activity.</title>
        <authorList>
            <person name="Priego Moreno S."/>
            <person name="Jones R.M."/>
            <person name="Poovathumkadavil D."/>
            <person name="Scaramuzza S."/>
            <person name="Gambus A."/>
        </authorList>
    </citation>
    <scope>IDENTIFICATION IN THE CMG HELICASE COMPLEX</scope>
</reference>
<reference key="11">
    <citation type="journal article" date="2019" name="Nature">
        <title>TRAIP is a master regulator of DNA interstrand crosslink repair.</title>
        <authorList>
            <person name="Wu R.A."/>
            <person name="Semlow D.R."/>
            <person name="Kamimae-Lanning A.N."/>
            <person name="Kochenova O.V."/>
            <person name="Chistol G."/>
            <person name="Hodskinson M.R."/>
            <person name="Amunugama R."/>
            <person name="Sparks J.L."/>
            <person name="Wang M."/>
            <person name="Deng L."/>
            <person name="Mimoso C.A."/>
            <person name="Low E."/>
            <person name="Patel K.J."/>
            <person name="Walter J.C."/>
        </authorList>
    </citation>
    <scope>IDENTIFICATION IN THE CMG HELICASE COMPLEX</scope>
</reference>
<proteinExistence type="evidence at protein level"/>
<accession>P30664</accession>
<accession>Q6GQ77</accession>
<accession>Q91679</accession>
<organism>
    <name type="scientific">Xenopus laevis</name>
    <name type="common">African clawed frog</name>
    <dbReference type="NCBI Taxonomy" id="8355"/>
    <lineage>
        <taxon>Eukaryota</taxon>
        <taxon>Metazoa</taxon>
        <taxon>Chordata</taxon>
        <taxon>Craniata</taxon>
        <taxon>Vertebrata</taxon>
        <taxon>Euteleostomi</taxon>
        <taxon>Amphibia</taxon>
        <taxon>Batrachia</taxon>
        <taxon>Anura</taxon>
        <taxon>Pipoidea</taxon>
        <taxon>Pipidae</taxon>
        <taxon>Xenopodinae</taxon>
        <taxon>Xenopus</taxon>
        <taxon>Xenopus</taxon>
    </lineage>
</organism>
<protein>
    <recommendedName>
        <fullName>DNA replication licensing factor mcm4-B</fullName>
        <ecNumber evidence="2">3.6.4.12</ecNumber>
    </recommendedName>
    <alternativeName>
        <fullName>CDC21 homolog-B</fullName>
    </alternativeName>
    <alternativeName>
        <fullName>Minichromosome maintenance protein 4-B</fullName>
        <shortName>xMCM4-B</shortName>
    </alternativeName>
    <alternativeName>
        <fullName>P1-CDC21-B</fullName>
    </alternativeName>
</protein>
<evidence type="ECO:0000250" key="1">
    <source>
        <dbReference type="UniProtKB" id="P33991"/>
    </source>
</evidence>
<evidence type="ECO:0000250" key="2">
    <source>
        <dbReference type="UniProtKB" id="P49717"/>
    </source>
</evidence>
<evidence type="ECO:0000255" key="3"/>
<evidence type="ECO:0000256" key="4">
    <source>
        <dbReference type="SAM" id="MobiDB-lite"/>
    </source>
</evidence>
<evidence type="ECO:0000269" key="5">
    <source>
    </source>
</evidence>
<evidence type="ECO:0000269" key="6">
    <source>
    </source>
</evidence>
<evidence type="ECO:0000269" key="7">
    <source>
    </source>
</evidence>
<evidence type="ECO:0000269" key="8">
    <source>
    </source>
</evidence>
<evidence type="ECO:0000269" key="9">
    <source>
    </source>
</evidence>
<evidence type="ECO:0000269" key="10">
    <source>
    </source>
</evidence>
<evidence type="ECO:0000269" key="11">
    <source>
    </source>
</evidence>
<evidence type="ECO:0000269" key="12">
    <source>
    </source>
</evidence>
<evidence type="ECO:0000269" key="13">
    <source>
    </source>
</evidence>
<evidence type="ECO:0000305" key="14"/>
<evidence type="ECO:0007829" key="15">
    <source>
        <dbReference type="PDB" id="8Q6O"/>
    </source>
</evidence>
<comment type="function">
    <text evidence="7">Acts as a component of the MCM2-7 complex (MCM complex) which is the replicative helicase essential for 'once per cell cycle' DNA replication initiation and elongation in eukaryotic cells. Core component of CDC45-MCM-GINS (CMG) helicase, the molecular machine that unwinds template DNA during replication, and around which the replisome is built. The active ATPase sites in the MCM2-7 ring are formed through the interaction surfaces of two neighboring subunits such that a critical structure of a conserved arginine finger motif is provided in trans relative to the ATP-binding site of the Walker A box of the adjacent subunit. The six ATPase active sites, however, are likely to contribute differentially to the complex helicase activity.</text>
</comment>
<comment type="catalytic activity">
    <reaction evidence="2">
        <text>ATP + H2O = ADP + phosphate + H(+)</text>
        <dbReference type="Rhea" id="RHEA:13065"/>
        <dbReference type="ChEBI" id="CHEBI:15377"/>
        <dbReference type="ChEBI" id="CHEBI:15378"/>
        <dbReference type="ChEBI" id="CHEBI:30616"/>
        <dbReference type="ChEBI" id="CHEBI:43474"/>
        <dbReference type="ChEBI" id="CHEBI:456216"/>
        <dbReference type="EC" id="3.6.4.12"/>
    </reaction>
    <physiologicalReaction direction="left-to-right" evidence="2">
        <dbReference type="Rhea" id="RHEA:13066"/>
    </physiologicalReaction>
</comment>
<comment type="subunit">
    <text evidence="7 8 11 12 13">Component of the mcm2-7 complex (RLF-M) (PubMed:16369567, PubMed:8901561, PubMed:9851868). The complex forms a toroidal hexameric ring with the proposed subunit order mcm2-mcm6-mcm4-mcm7-mcm3-mcm5 (PubMed:16369567, PubMed:8901561, PubMed:9851868). The heterodimer of mmcm3/mcm5 interacts with mcm4, mmcm6, mcm7 and weakly with mcm2 (PubMed:16369567, PubMed:8901561, PubMed:9851868). Begins to associate with zmcm6 at the neurula stage (PubMed:9512418). Component of the CMG helicase complex, composed of the mcm2-7 complex, the GINS complex and cdc45 (PubMed:30842657).</text>
</comment>
<comment type="subcellular location">
    <subcellularLocation>
        <location evidence="10">Nucleus</location>
    </subcellularLocation>
    <subcellularLocation>
        <location evidence="10">Chromosome</location>
    </subcellularLocation>
    <text evidence="9 10">Associated with chromatin before the formation of nuclei and detaches from it as DNA replication progresses.</text>
</comment>
<comment type="developmental stage">
    <text evidence="12">Expressed throughout development.</text>
</comment>
<comment type="PTM">
    <text evidence="5 6 10 11">Hyperphosphorylated during mitosis in a mechanism requiring cdc2-cyclin B and other kinases. Undergoes dephosphorylation after exiting mitosis, existing in a partially phosphorylated state in the cytosolic interphase mcm complex which associates with the pre-replication complexes (pre-Rcs). Complete dephosphorylation inactivates the mcm complex, preventing its binding to chromatin. Becomes actively phosphorylated during S phase once the mcm complex is assembled on the chromatin. This chromatin-associated phosphorylation occurs during the activation of the pre-Rcs and is independent of cdks. Phosphorylated by the cdc7-dbf4b complex.</text>
</comment>
<comment type="miscellaneous">
    <text evidence="2">Early fractionation of eukaryotic MCM proteins yielded a variety of dimeric, trimeric and tetrameric complexes with unclear biological significance. Specifically a MCM467 subcomplex is shown to have in vitro helicase activity which is inhibited by the MCM2 subunit. The MCM2-7 hexamer is the proposed physiological active complex.</text>
</comment>
<comment type="similarity">
    <text evidence="14">Belongs to the MCM family.</text>
</comment>